<protein>
    <recommendedName>
        <fullName>Probable phosphoketolase</fullName>
        <ecNumber>4.1.2.-</ecNumber>
    </recommendedName>
</protein>
<reference key="1">
    <citation type="journal article" date="2000" name="DNA Res.">
        <title>Complete genome structure of the nitrogen-fixing symbiotic bacterium Mesorhizobium loti.</title>
        <authorList>
            <person name="Kaneko T."/>
            <person name="Nakamura Y."/>
            <person name="Sato S."/>
            <person name="Asamizu E."/>
            <person name="Kato T."/>
            <person name="Sasamoto S."/>
            <person name="Watanabe A."/>
            <person name="Idesawa K."/>
            <person name="Ishikawa A."/>
            <person name="Kawashima K."/>
            <person name="Kimura T."/>
            <person name="Kishida Y."/>
            <person name="Kiyokawa C."/>
            <person name="Kohara M."/>
            <person name="Matsumoto M."/>
            <person name="Matsuno A."/>
            <person name="Mochizuki Y."/>
            <person name="Nakayama S."/>
            <person name="Nakazaki N."/>
            <person name="Shimpo S."/>
            <person name="Sugimoto M."/>
            <person name="Takeuchi C."/>
            <person name="Yamada M."/>
            <person name="Tabata S."/>
        </authorList>
    </citation>
    <scope>NUCLEOTIDE SEQUENCE [LARGE SCALE GENOMIC DNA]</scope>
    <source>
        <strain>LMG 29417 / CECT 9101 / MAFF 303099</strain>
    </source>
</reference>
<gene>
    <name type="ordered locus">mlr6575</name>
</gene>
<comment type="cofactor">
    <cofactor evidence="1">
        <name>thiamine diphosphate</name>
        <dbReference type="ChEBI" id="CHEBI:58937"/>
    </cofactor>
</comment>
<comment type="similarity">
    <text evidence="1">Belongs to the XFP family.</text>
</comment>
<dbReference type="EC" id="4.1.2.-"/>
<dbReference type="EMBL" id="BA000012">
    <property type="protein sequence ID" value="BAB52840.1"/>
    <property type="molecule type" value="Genomic_DNA"/>
</dbReference>
<dbReference type="RefSeq" id="WP_010914153.1">
    <property type="nucleotide sequence ID" value="NC_002678.2"/>
</dbReference>
<dbReference type="SMR" id="Q988V7"/>
<dbReference type="KEGG" id="mlo:mlr6575"/>
<dbReference type="PATRIC" id="fig|266835.9.peg.5218"/>
<dbReference type="eggNOG" id="COG3957">
    <property type="taxonomic scope" value="Bacteria"/>
</dbReference>
<dbReference type="HOGENOM" id="CLU_013954_2_0_5"/>
<dbReference type="Proteomes" id="UP000000552">
    <property type="component" value="Chromosome"/>
</dbReference>
<dbReference type="GO" id="GO:0016832">
    <property type="term" value="F:aldehyde-lyase activity"/>
    <property type="evidence" value="ECO:0007669"/>
    <property type="project" value="UniProtKB-UniRule"/>
</dbReference>
<dbReference type="GO" id="GO:0005975">
    <property type="term" value="P:carbohydrate metabolic process"/>
    <property type="evidence" value="ECO:0007669"/>
    <property type="project" value="InterPro"/>
</dbReference>
<dbReference type="CDD" id="cd02011">
    <property type="entry name" value="TPP_PK"/>
    <property type="match status" value="1"/>
</dbReference>
<dbReference type="Gene3D" id="3.40.50.920">
    <property type="match status" value="1"/>
</dbReference>
<dbReference type="Gene3D" id="3.40.50.970">
    <property type="match status" value="2"/>
</dbReference>
<dbReference type="HAMAP" id="MF_01403">
    <property type="entry name" value="Phosphoketolase"/>
    <property type="match status" value="1"/>
</dbReference>
<dbReference type="InterPro" id="IPR023962">
    <property type="entry name" value="Phosphoketolase"/>
</dbReference>
<dbReference type="InterPro" id="IPR029061">
    <property type="entry name" value="THDP-binding"/>
</dbReference>
<dbReference type="InterPro" id="IPR009014">
    <property type="entry name" value="Transketo_C/PFOR_II"/>
</dbReference>
<dbReference type="InterPro" id="IPR005593">
    <property type="entry name" value="Xul5P/Fru6P_PKetolase"/>
</dbReference>
<dbReference type="InterPro" id="IPR018969">
    <property type="entry name" value="Xul5P/Fru6P_PKetolase_C"/>
</dbReference>
<dbReference type="InterPro" id="IPR019790">
    <property type="entry name" value="Xul5P/Fru6P_PKetolase_CS"/>
</dbReference>
<dbReference type="InterPro" id="IPR018970">
    <property type="entry name" value="Xul5P/Fru6P_PKetolase_N"/>
</dbReference>
<dbReference type="InterPro" id="IPR019789">
    <property type="entry name" value="Xul5P/Fru6P_PKetolase_ThDP_BS"/>
</dbReference>
<dbReference type="NCBIfam" id="NF003616">
    <property type="entry name" value="PRK05261.1-1"/>
    <property type="match status" value="1"/>
</dbReference>
<dbReference type="NCBIfam" id="NF003617">
    <property type="entry name" value="PRK05261.1-2"/>
    <property type="match status" value="1"/>
</dbReference>
<dbReference type="NCBIfam" id="NF003619">
    <property type="entry name" value="PRK05261.1-4"/>
    <property type="match status" value="1"/>
</dbReference>
<dbReference type="NCBIfam" id="NF003621">
    <property type="entry name" value="PRK05261.1-6"/>
    <property type="match status" value="1"/>
</dbReference>
<dbReference type="PANTHER" id="PTHR31273">
    <property type="entry name" value="PHOSPHOKETOLASE-RELATED"/>
    <property type="match status" value="1"/>
</dbReference>
<dbReference type="PANTHER" id="PTHR31273:SF0">
    <property type="entry name" value="PHOSPHOKETOLASE-RELATED"/>
    <property type="match status" value="1"/>
</dbReference>
<dbReference type="Pfam" id="PF03894">
    <property type="entry name" value="XFP"/>
    <property type="match status" value="1"/>
</dbReference>
<dbReference type="Pfam" id="PF09363">
    <property type="entry name" value="XFP_C"/>
    <property type="match status" value="1"/>
</dbReference>
<dbReference type="Pfam" id="PF09364">
    <property type="entry name" value="XFP_N"/>
    <property type="match status" value="1"/>
</dbReference>
<dbReference type="PIRSF" id="PIRSF017245">
    <property type="entry name" value="Phosphoketolase"/>
    <property type="match status" value="1"/>
</dbReference>
<dbReference type="SUPFAM" id="SSF52518">
    <property type="entry name" value="Thiamin diphosphate-binding fold (THDP-binding)"/>
    <property type="match status" value="2"/>
</dbReference>
<dbReference type="PROSITE" id="PS60002">
    <property type="entry name" value="PHOSPHOKETOLASE_1"/>
    <property type="match status" value="1"/>
</dbReference>
<dbReference type="PROSITE" id="PS60003">
    <property type="entry name" value="PHOSPHOKETOLASE_2"/>
    <property type="match status" value="1"/>
</dbReference>
<proteinExistence type="inferred from homology"/>
<accession>Q988V7</accession>
<evidence type="ECO:0000305" key="1"/>
<keyword id="KW-0456">Lyase</keyword>
<keyword id="KW-0786">Thiamine pyrophosphate</keyword>
<name>PHK_RHILO</name>
<organism>
    <name type="scientific">Mesorhizobium japonicum (strain LMG 29417 / CECT 9101 / MAFF 303099)</name>
    <name type="common">Mesorhizobium loti (strain MAFF 303099)</name>
    <dbReference type="NCBI Taxonomy" id="266835"/>
    <lineage>
        <taxon>Bacteria</taxon>
        <taxon>Pseudomonadati</taxon>
        <taxon>Pseudomonadota</taxon>
        <taxon>Alphaproteobacteria</taxon>
        <taxon>Hyphomicrobiales</taxon>
        <taxon>Phyllobacteriaceae</taxon>
        <taxon>Mesorhizobium</taxon>
    </lineage>
</organism>
<feature type="chain" id="PRO_0000193885" description="Probable phosphoketolase">
    <location>
        <begin position="1"/>
        <end position="807"/>
    </location>
</feature>
<sequence>MNDHTTIAASGGRLSDRELHDLDAYWRAANYLTIGQIYLLDNPLLREPLRLEHVKPRLLGHWGTSPGLSFIYAHLNRAIRLRDANVIYICGPGHGGPAMVANTYLEGTYSELNPDIAMDEQGMRKLFRQFSFPGGIPSHAAPDVPGSIHEGGELGYSLSHAYGAAFDNPDLVVACVVGDGEAETGPLAAAWHSNKFLNPARDGAVLPILHLNGYKIANPTILARIPEDELRALFAGYGYEPLFVAGHEPALMHQRMATVLDDAFDRISAIKHAARNGSGATGSRPEWPMIVLRSPKGWTGPKEVDGLKTEGFWRSHQVPLSGLAENPAHLKLLEEWLKSYRPEELFDAAGAPVASIRATAPQATKRMSANPHANGGLLRRSLELPGLHDHAVSLERPGAVKAESTRVMGSFLRDVMRLNEVAKNFRIVGPDETASNRLQDVFEVTERGWMEKILPEDVHLGREGRVLEILSEHTCQGWLEGYLLTGRHGLFSCYEAFIHIVDSMFNQHAKWLDACREIPWRRPIASLNYLLSSHVWHQEHNGFSHQDPGFIDVALNKKADIVRVYLPPDANTLLCVTDHVLQTWNRINVIVAGKPPSWQWLSMDKAIVHCRAGIGVWDWASTDDGAEPDVVMACAGDVPTLETLAAVQILRQQVPDLRIRVVNVVDLMTLQPKEYHPHGLSDREFDALFTPDKPVIFAYHGYPWTIHRLTYRRTNHDNIHVRGYNEEGTTTTPFDMTVLNGLDRFHIVQSVLDWVPRLKGVRVSLKQAMDSKLLEHRAYICSHGQDMPEILDWKWGQDPDAAPKRPD</sequence>